<dbReference type="EC" id="6.1.1.17" evidence="1"/>
<dbReference type="EMBL" id="CP000027">
    <property type="protein sequence ID" value="AAW39383.1"/>
    <property type="molecule type" value="Genomic_DNA"/>
</dbReference>
<dbReference type="RefSeq" id="WP_010937053.1">
    <property type="nucleotide sequence ID" value="NC_002936.3"/>
</dbReference>
<dbReference type="SMR" id="Q3Z6S3"/>
<dbReference type="FunCoup" id="Q3Z6S3">
    <property type="interactions" value="356"/>
</dbReference>
<dbReference type="STRING" id="243164.DET1365"/>
<dbReference type="GeneID" id="3229342"/>
<dbReference type="KEGG" id="det:DET1365"/>
<dbReference type="PATRIC" id="fig|243164.10.peg.1293"/>
<dbReference type="eggNOG" id="COG0008">
    <property type="taxonomic scope" value="Bacteria"/>
</dbReference>
<dbReference type="HOGENOM" id="CLU_015768_6_3_0"/>
<dbReference type="InParanoid" id="Q3Z6S3"/>
<dbReference type="Proteomes" id="UP000008289">
    <property type="component" value="Chromosome"/>
</dbReference>
<dbReference type="GO" id="GO:0005829">
    <property type="term" value="C:cytosol"/>
    <property type="evidence" value="ECO:0007669"/>
    <property type="project" value="TreeGrafter"/>
</dbReference>
<dbReference type="GO" id="GO:0005524">
    <property type="term" value="F:ATP binding"/>
    <property type="evidence" value="ECO:0007669"/>
    <property type="project" value="UniProtKB-UniRule"/>
</dbReference>
<dbReference type="GO" id="GO:0004818">
    <property type="term" value="F:glutamate-tRNA ligase activity"/>
    <property type="evidence" value="ECO:0007669"/>
    <property type="project" value="UniProtKB-UniRule"/>
</dbReference>
<dbReference type="GO" id="GO:0000049">
    <property type="term" value="F:tRNA binding"/>
    <property type="evidence" value="ECO:0007669"/>
    <property type="project" value="InterPro"/>
</dbReference>
<dbReference type="GO" id="GO:0008270">
    <property type="term" value="F:zinc ion binding"/>
    <property type="evidence" value="ECO:0007669"/>
    <property type="project" value="UniProtKB-UniRule"/>
</dbReference>
<dbReference type="GO" id="GO:0006424">
    <property type="term" value="P:glutamyl-tRNA aminoacylation"/>
    <property type="evidence" value="ECO:0007669"/>
    <property type="project" value="UniProtKB-UniRule"/>
</dbReference>
<dbReference type="CDD" id="cd00808">
    <property type="entry name" value="GluRS_core"/>
    <property type="match status" value="1"/>
</dbReference>
<dbReference type="FunFam" id="3.40.50.620:FF:000045">
    <property type="entry name" value="Glutamate--tRNA ligase, mitochondrial"/>
    <property type="match status" value="1"/>
</dbReference>
<dbReference type="Gene3D" id="1.10.10.350">
    <property type="match status" value="1"/>
</dbReference>
<dbReference type="Gene3D" id="3.40.50.620">
    <property type="entry name" value="HUPs"/>
    <property type="match status" value="1"/>
</dbReference>
<dbReference type="HAMAP" id="MF_00022">
    <property type="entry name" value="Glu_tRNA_synth_type1"/>
    <property type="match status" value="1"/>
</dbReference>
<dbReference type="InterPro" id="IPR045462">
    <property type="entry name" value="aa-tRNA-synth_I_cd-bd"/>
</dbReference>
<dbReference type="InterPro" id="IPR020751">
    <property type="entry name" value="aa-tRNA-synth_I_codon-bd_sub2"/>
</dbReference>
<dbReference type="InterPro" id="IPR001412">
    <property type="entry name" value="aa-tRNA-synth_I_CS"/>
</dbReference>
<dbReference type="InterPro" id="IPR008925">
    <property type="entry name" value="aa_tRNA-synth_I_cd-bd_sf"/>
</dbReference>
<dbReference type="InterPro" id="IPR004527">
    <property type="entry name" value="Glu-tRNA-ligase_bac/mito"/>
</dbReference>
<dbReference type="InterPro" id="IPR000924">
    <property type="entry name" value="Glu/Gln-tRNA-synth"/>
</dbReference>
<dbReference type="InterPro" id="IPR020058">
    <property type="entry name" value="Glu/Gln-tRNA-synth_Ib_cat-dom"/>
</dbReference>
<dbReference type="InterPro" id="IPR049940">
    <property type="entry name" value="GluQ/Sye"/>
</dbReference>
<dbReference type="InterPro" id="IPR033910">
    <property type="entry name" value="GluRS_core"/>
</dbReference>
<dbReference type="InterPro" id="IPR014729">
    <property type="entry name" value="Rossmann-like_a/b/a_fold"/>
</dbReference>
<dbReference type="NCBIfam" id="TIGR00464">
    <property type="entry name" value="gltX_bact"/>
    <property type="match status" value="1"/>
</dbReference>
<dbReference type="PANTHER" id="PTHR43311">
    <property type="entry name" value="GLUTAMATE--TRNA LIGASE"/>
    <property type="match status" value="1"/>
</dbReference>
<dbReference type="PANTHER" id="PTHR43311:SF2">
    <property type="entry name" value="GLUTAMATE--TRNA LIGASE, MITOCHONDRIAL-RELATED"/>
    <property type="match status" value="1"/>
</dbReference>
<dbReference type="Pfam" id="PF19269">
    <property type="entry name" value="Anticodon_2"/>
    <property type="match status" value="1"/>
</dbReference>
<dbReference type="Pfam" id="PF00749">
    <property type="entry name" value="tRNA-synt_1c"/>
    <property type="match status" value="1"/>
</dbReference>
<dbReference type="PRINTS" id="PR00987">
    <property type="entry name" value="TRNASYNTHGLU"/>
</dbReference>
<dbReference type="SUPFAM" id="SSF48163">
    <property type="entry name" value="An anticodon-binding domain of class I aminoacyl-tRNA synthetases"/>
    <property type="match status" value="1"/>
</dbReference>
<dbReference type="SUPFAM" id="SSF52374">
    <property type="entry name" value="Nucleotidylyl transferase"/>
    <property type="match status" value="1"/>
</dbReference>
<dbReference type="PROSITE" id="PS00178">
    <property type="entry name" value="AA_TRNA_LIGASE_I"/>
    <property type="match status" value="1"/>
</dbReference>
<comment type="function">
    <text evidence="1">Catalyzes the attachment of glutamate to tRNA(Glu) in a two-step reaction: glutamate is first activated by ATP to form Glu-AMP and then transferred to the acceptor end of tRNA(Glu).</text>
</comment>
<comment type="catalytic activity">
    <reaction evidence="1">
        <text>tRNA(Glu) + L-glutamate + ATP = L-glutamyl-tRNA(Glu) + AMP + diphosphate</text>
        <dbReference type="Rhea" id="RHEA:23540"/>
        <dbReference type="Rhea" id="RHEA-COMP:9663"/>
        <dbReference type="Rhea" id="RHEA-COMP:9680"/>
        <dbReference type="ChEBI" id="CHEBI:29985"/>
        <dbReference type="ChEBI" id="CHEBI:30616"/>
        <dbReference type="ChEBI" id="CHEBI:33019"/>
        <dbReference type="ChEBI" id="CHEBI:78442"/>
        <dbReference type="ChEBI" id="CHEBI:78520"/>
        <dbReference type="ChEBI" id="CHEBI:456215"/>
        <dbReference type="EC" id="6.1.1.17"/>
    </reaction>
</comment>
<comment type="cofactor">
    <cofactor evidence="1">
        <name>Zn(2+)</name>
        <dbReference type="ChEBI" id="CHEBI:29105"/>
    </cofactor>
    <text evidence="1">Binds 1 zinc ion per subunit.</text>
</comment>
<comment type="subunit">
    <text evidence="1">Monomer.</text>
</comment>
<comment type="subcellular location">
    <subcellularLocation>
        <location evidence="1">Cytoplasm</location>
    </subcellularLocation>
</comment>
<comment type="similarity">
    <text evidence="1">Belongs to the class-I aminoacyl-tRNA synthetase family. Glutamate--tRNA ligase type 1 subfamily.</text>
</comment>
<name>SYE_DEHM1</name>
<feature type="chain" id="PRO_0000237357" description="Glutamate--tRNA ligase">
    <location>
        <begin position="1"/>
        <end position="484"/>
    </location>
</feature>
<feature type="short sequence motif" description="'HIGH' region" evidence="1">
    <location>
        <begin position="11"/>
        <end position="21"/>
    </location>
</feature>
<feature type="short sequence motif" description="'KMSKS' region" evidence="1">
    <location>
        <begin position="245"/>
        <end position="249"/>
    </location>
</feature>
<feature type="binding site" evidence="1">
    <location>
        <position position="108"/>
    </location>
    <ligand>
        <name>Zn(2+)</name>
        <dbReference type="ChEBI" id="CHEBI:29105"/>
    </ligand>
</feature>
<feature type="binding site" evidence="1">
    <location>
        <position position="110"/>
    </location>
    <ligand>
        <name>Zn(2+)</name>
        <dbReference type="ChEBI" id="CHEBI:29105"/>
    </ligand>
</feature>
<feature type="binding site" evidence="1">
    <location>
        <position position="135"/>
    </location>
    <ligand>
        <name>Zn(2+)</name>
        <dbReference type="ChEBI" id="CHEBI:29105"/>
    </ligand>
</feature>
<feature type="binding site" evidence="1">
    <location>
        <position position="137"/>
    </location>
    <ligand>
        <name>Zn(2+)</name>
        <dbReference type="ChEBI" id="CHEBI:29105"/>
    </ligand>
</feature>
<feature type="binding site" evidence="1">
    <location>
        <position position="248"/>
    </location>
    <ligand>
        <name>ATP</name>
        <dbReference type="ChEBI" id="CHEBI:30616"/>
    </ligand>
</feature>
<proteinExistence type="inferred from homology"/>
<organism>
    <name type="scientific">Dehalococcoides mccartyi (strain ATCC BAA-2266 / KCTC 15142 / 195)</name>
    <name type="common">Dehalococcoides ethenogenes (strain 195)</name>
    <dbReference type="NCBI Taxonomy" id="243164"/>
    <lineage>
        <taxon>Bacteria</taxon>
        <taxon>Bacillati</taxon>
        <taxon>Chloroflexota</taxon>
        <taxon>Dehalococcoidia</taxon>
        <taxon>Dehalococcoidales</taxon>
        <taxon>Dehalococcoidaceae</taxon>
        <taxon>Dehalococcoides</taxon>
    </lineage>
</organism>
<reference key="1">
    <citation type="journal article" date="2005" name="Science">
        <title>Genome sequence of the PCE-dechlorinating bacterium Dehalococcoides ethenogenes.</title>
        <authorList>
            <person name="Seshadri R."/>
            <person name="Adrian L."/>
            <person name="Fouts D.E."/>
            <person name="Eisen J.A."/>
            <person name="Phillippy A.M."/>
            <person name="Methe B.A."/>
            <person name="Ward N.L."/>
            <person name="Nelson W.C."/>
            <person name="DeBoy R.T."/>
            <person name="Khouri H.M."/>
            <person name="Kolonay J.F."/>
            <person name="Dodson R.J."/>
            <person name="Daugherty S.C."/>
            <person name="Brinkac L.M."/>
            <person name="Sullivan S.A."/>
            <person name="Madupu R."/>
            <person name="Nelson K.E."/>
            <person name="Kang K.H."/>
            <person name="Impraim M."/>
            <person name="Tran K."/>
            <person name="Robinson J.M."/>
            <person name="Forberger H.A."/>
            <person name="Fraser C.M."/>
            <person name="Zinder S.H."/>
            <person name="Heidelberg J.F."/>
        </authorList>
    </citation>
    <scope>NUCLEOTIDE SEQUENCE [LARGE SCALE GENOMIC DNA]</scope>
    <source>
        <strain>ATCC BAA-2266 / KCTC 15142 / 195</strain>
    </source>
</reference>
<keyword id="KW-0030">Aminoacyl-tRNA synthetase</keyword>
<keyword id="KW-0067">ATP-binding</keyword>
<keyword id="KW-0963">Cytoplasm</keyword>
<keyword id="KW-0436">Ligase</keyword>
<keyword id="KW-0479">Metal-binding</keyword>
<keyword id="KW-0547">Nucleotide-binding</keyword>
<keyword id="KW-0648">Protein biosynthesis</keyword>
<keyword id="KW-0862">Zinc</keyword>
<sequence>MTNEVRVRYAPSPTGYPHLGNIRTAMFNWLFARHNGGKFIVRIEDTDRERYVEGAVESILESLNWLGLDWDEGPDKGGDYGPYYQSERLFLYRQAAERLVTEGKAYYCHCSSERLDKMREEQIARKEPPGYDRCCRDLCLGQKEGAVIRFKIPLEGQTTFIDLIRGEVTFDNAKQDDFVILKSDGFPTYHLASVVDDHAMQISHVLRAEEWLPSTPKHLMLYKALGYTPPQYAHLPMILGPDRSKLSKRHGATSTIEYKQAGYLPETMVNFLSLLGWAYDDKTELFSRKQLIEYFCLEKVSKTAAIFNYEKLDWMNGMYIRTLSAPDLASRAIPFLEKDERIAASGRLNFDYTTKVMPLIQERVKKLSELAELCWFIYSDNISYDPASLIDKKLTKDESLCALKAAFARLEALANFDAVSMEEHIRPLAAELELKPGQLFGMLRTASTGQQVAPPLFQTMEVLGRERCLGRIAMAIARLSELPS</sequence>
<gene>
    <name evidence="1" type="primary">gltX</name>
    <name type="ordered locus">DET1365</name>
</gene>
<evidence type="ECO:0000255" key="1">
    <source>
        <dbReference type="HAMAP-Rule" id="MF_00022"/>
    </source>
</evidence>
<accession>Q3Z6S3</accession>
<protein>
    <recommendedName>
        <fullName evidence="1">Glutamate--tRNA ligase</fullName>
        <ecNumber evidence="1">6.1.1.17</ecNumber>
    </recommendedName>
    <alternativeName>
        <fullName evidence="1">Glutamyl-tRNA synthetase</fullName>
        <shortName evidence="1">GluRS</shortName>
    </alternativeName>
</protein>